<sequence>MQIYLVGGAVRDQLLQLPVYDRDWVVVGSSPQAMLAAGFQAVGKDFPVFLHPNSKEEHALARTERKTGVGYTGFACHYAPDVSLEDDLLRRDLTINAMAQDNSGQLIDPYGGQRDLAAKVLRHVSPAFVEDPLRVLRVARFAAKLHHLGFTVAEETMQLMAKIVQSGELQHLTAERVWQEWHKSLSTNHPEVFLQVLRDCGALAVVLPEIDRLFGVPQPEKWHPEIDTGIHTLMVAKQAAQLSDSLPVRFAAQVHDLGKGVTPPSEWPSHKLHCHTGLNIIESLCERIRVPNEFRDLALAVCAQHSNIHRADELKPTTKLKVLGLLDVWRKPERLEQVLLCCEADHRGRLGLENEPYPQREIFLRAYQAALGVAVQAVIADGFHGKQIKEELDKRRVSAIEAL</sequence>
<evidence type="ECO:0000255" key="1">
    <source>
        <dbReference type="HAMAP-Rule" id="MF_01261"/>
    </source>
</evidence>
<feature type="chain" id="PRO_1000073179" description="Multifunctional CCA protein">
    <location>
        <begin position="1"/>
        <end position="403"/>
    </location>
</feature>
<feature type="domain" description="HD" evidence="1">
    <location>
        <begin position="228"/>
        <end position="329"/>
    </location>
</feature>
<feature type="binding site" evidence="1">
    <location>
        <position position="8"/>
    </location>
    <ligand>
        <name>ATP</name>
        <dbReference type="ChEBI" id="CHEBI:30616"/>
    </ligand>
</feature>
<feature type="binding site" evidence="1">
    <location>
        <position position="8"/>
    </location>
    <ligand>
        <name>CTP</name>
        <dbReference type="ChEBI" id="CHEBI:37563"/>
    </ligand>
</feature>
<feature type="binding site" evidence="1">
    <location>
        <position position="11"/>
    </location>
    <ligand>
        <name>ATP</name>
        <dbReference type="ChEBI" id="CHEBI:30616"/>
    </ligand>
</feature>
<feature type="binding site" evidence="1">
    <location>
        <position position="11"/>
    </location>
    <ligand>
        <name>CTP</name>
        <dbReference type="ChEBI" id="CHEBI:37563"/>
    </ligand>
</feature>
<feature type="binding site" evidence="1">
    <location>
        <position position="21"/>
    </location>
    <ligand>
        <name>Mg(2+)</name>
        <dbReference type="ChEBI" id="CHEBI:18420"/>
    </ligand>
</feature>
<feature type="binding site" evidence="1">
    <location>
        <position position="23"/>
    </location>
    <ligand>
        <name>Mg(2+)</name>
        <dbReference type="ChEBI" id="CHEBI:18420"/>
    </ligand>
</feature>
<feature type="binding site" evidence="1">
    <location>
        <position position="91"/>
    </location>
    <ligand>
        <name>ATP</name>
        <dbReference type="ChEBI" id="CHEBI:30616"/>
    </ligand>
</feature>
<feature type="binding site" evidence="1">
    <location>
        <position position="91"/>
    </location>
    <ligand>
        <name>CTP</name>
        <dbReference type="ChEBI" id="CHEBI:37563"/>
    </ligand>
</feature>
<feature type="binding site" evidence="1">
    <location>
        <position position="137"/>
    </location>
    <ligand>
        <name>ATP</name>
        <dbReference type="ChEBI" id="CHEBI:30616"/>
    </ligand>
</feature>
<feature type="binding site" evidence="1">
    <location>
        <position position="137"/>
    </location>
    <ligand>
        <name>CTP</name>
        <dbReference type="ChEBI" id="CHEBI:37563"/>
    </ligand>
</feature>
<feature type="binding site" evidence="1">
    <location>
        <position position="140"/>
    </location>
    <ligand>
        <name>ATP</name>
        <dbReference type="ChEBI" id="CHEBI:30616"/>
    </ligand>
</feature>
<feature type="binding site" evidence="1">
    <location>
        <position position="140"/>
    </location>
    <ligand>
        <name>CTP</name>
        <dbReference type="ChEBI" id="CHEBI:37563"/>
    </ligand>
</feature>
<accession>A5F5I2</accession>
<accession>C3M4T7</accession>
<reference key="1">
    <citation type="submission" date="2007-03" db="EMBL/GenBank/DDBJ databases">
        <authorList>
            <person name="Heidelberg J."/>
        </authorList>
    </citation>
    <scope>NUCLEOTIDE SEQUENCE [LARGE SCALE GENOMIC DNA]</scope>
    <source>
        <strain>ATCC 39541 / Classical Ogawa 395 / O395</strain>
    </source>
</reference>
<reference key="2">
    <citation type="journal article" date="2008" name="PLoS ONE">
        <title>A recalibrated molecular clock and independent origins for the cholera pandemic clones.</title>
        <authorList>
            <person name="Feng L."/>
            <person name="Reeves P.R."/>
            <person name="Lan R."/>
            <person name="Ren Y."/>
            <person name="Gao C."/>
            <person name="Zhou Z."/>
            <person name="Ren Y."/>
            <person name="Cheng J."/>
            <person name="Wang W."/>
            <person name="Wang J."/>
            <person name="Qian W."/>
            <person name="Li D."/>
            <person name="Wang L."/>
        </authorList>
    </citation>
    <scope>NUCLEOTIDE SEQUENCE [LARGE SCALE GENOMIC DNA]</scope>
    <source>
        <strain>ATCC 39541 / Classical Ogawa 395 / O395</strain>
    </source>
</reference>
<gene>
    <name evidence="1" type="primary">cca</name>
    <name type="ordered locus">VC0395_A2024</name>
    <name type="ordered locus">VC395_2561</name>
</gene>
<proteinExistence type="inferred from homology"/>
<name>CCA_VIBC3</name>
<comment type="function">
    <text evidence="1">Catalyzes the addition and repair of the essential 3'-terminal CCA sequence in tRNAs without using a nucleic acid template. Adds these three nucleotides in the order of C, C, and A to the tRNA nucleotide-73, using CTP and ATP as substrates and producing inorganic pyrophosphate. tRNA 3'-terminal CCA addition is required both for tRNA processing and repair. Also involved in tRNA surveillance by mediating tandem CCA addition to generate a CCACCA at the 3' terminus of unstable tRNAs. While stable tRNAs receive only 3'-terminal CCA, unstable tRNAs are marked with CCACCA and rapidly degraded.</text>
</comment>
<comment type="catalytic activity">
    <reaction evidence="1">
        <text>a tRNA precursor + 2 CTP + ATP = a tRNA with a 3' CCA end + 3 diphosphate</text>
        <dbReference type="Rhea" id="RHEA:14433"/>
        <dbReference type="Rhea" id="RHEA-COMP:10465"/>
        <dbReference type="Rhea" id="RHEA-COMP:10468"/>
        <dbReference type="ChEBI" id="CHEBI:30616"/>
        <dbReference type="ChEBI" id="CHEBI:33019"/>
        <dbReference type="ChEBI" id="CHEBI:37563"/>
        <dbReference type="ChEBI" id="CHEBI:74896"/>
        <dbReference type="ChEBI" id="CHEBI:83071"/>
        <dbReference type="EC" id="2.7.7.72"/>
    </reaction>
</comment>
<comment type="catalytic activity">
    <reaction evidence="1">
        <text>a tRNA with a 3' CCA end + 2 CTP + ATP = a tRNA with a 3' CCACCA end + 3 diphosphate</text>
        <dbReference type="Rhea" id="RHEA:76235"/>
        <dbReference type="Rhea" id="RHEA-COMP:10468"/>
        <dbReference type="Rhea" id="RHEA-COMP:18655"/>
        <dbReference type="ChEBI" id="CHEBI:30616"/>
        <dbReference type="ChEBI" id="CHEBI:33019"/>
        <dbReference type="ChEBI" id="CHEBI:37563"/>
        <dbReference type="ChEBI" id="CHEBI:83071"/>
        <dbReference type="ChEBI" id="CHEBI:195187"/>
    </reaction>
    <physiologicalReaction direction="left-to-right" evidence="1">
        <dbReference type="Rhea" id="RHEA:76236"/>
    </physiologicalReaction>
</comment>
<comment type="cofactor">
    <cofactor evidence="1">
        <name>Mg(2+)</name>
        <dbReference type="ChEBI" id="CHEBI:18420"/>
    </cofactor>
    <text evidence="1">Magnesium is required for nucleotidyltransferase activity.</text>
</comment>
<comment type="cofactor">
    <cofactor evidence="1">
        <name>Ni(2+)</name>
        <dbReference type="ChEBI" id="CHEBI:49786"/>
    </cofactor>
    <text evidence="1">Nickel for phosphatase activity.</text>
</comment>
<comment type="subunit">
    <text evidence="1">Monomer. Can also form homodimers and oligomers.</text>
</comment>
<comment type="domain">
    <text evidence="1">Comprises two domains: an N-terminal domain containing the nucleotidyltransferase activity and a C-terminal HD domain associated with both phosphodiesterase and phosphatase activities.</text>
</comment>
<comment type="miscellaneous">
    <text evidence="1">A single active site specifically recognizes both ATP and CTP and is responsible for their addition.</text>
</comment>
<comment type="similarity">
    <text evidence="1">Belongs to the tRNA nucleotidyltransferase/poly(A) polymerase family. Bacterial CCA-adding enzyme type 1 subfamily.</text>
</comment>
<protein>
    <recommendedName>
        <fullName evidence="1">Multifunctional CCA protein</fullName>
    </recommendedName>
    <domain>
        <recommendedName>
            <fullName evidence="1">CCA-adding enzyme</fullName>
            <ecNumber evidence="1">2.7.7.72</ecNumber>
        </recommendedName>
        <alternativeName>
            <fullName evidence="1">CCA tRNA nucleotidyltransferase</fullName>
        </alternativeName>
        <alternativeName>
            <fullName evidence="1">tRNA CCA-pyrophosphorylase</fullName>
        </alternativeName>
        <alternativeName>
            <fullName evidence="1">tRNA adenylyl-/cytidylyl-transferase</fullName>
        </alternativeName>
        <alternativeName>
            <fullName evidence="1">tRNA nucleotidyltransferase</fullName>
        </alternativeName>
        <alternativeName>
            <fullName evidence="1">tRNA-NT</fullName>
        </alternativeName>
    </domain>
    <domain>
        <recommendedName>
            <fullName evidence="1">2'-nucleotidase</fullName>
            <ecNumber evidence="1">3.1.3.-</ecNumber>
        </recommendedName>
    </domain>
    <domain>
        <recommendedName>
            <fullName evidence="1">2',3'-cyclic phosphodiesterase</fullName>
            <ecNumber evidence="1">3.1.4.-</ecNumber>
        </recommendedName>
    </domain>
    <domain>
        <recommendedName>
            <fullName evidence="1">Phosphatase</fullName>
            <ecNumber evidence="1">3.1.3.-</ecNumber>
        </recommendedName>
    </domain>
</protein>
<dbReference type="EC" id="2.7.7.72" evidence="1"/>
<dbReference type="EC" id="3.1.3.-" evidence="1"/>
<dbReference type="EC" id="3.1.4.-" evidence="1"/>
<dbReference type="EMBL" id="CP000627">
    <property type="protein sequence ID" value="ABQ20498.1"/>
    <property type="molecule type" value="Genomic_DNA"/>
</dbReference>
<dbReference type="EMBL" id="CP001235">
    <property type="protein sequence ID" value="ACP10548.1"/>
    <property type="molecule type" value="Genomic_DNA"/>
</dbReference>
<dbReference type="RefSeq" id="WP_001167849.1">
    <property type="nucleotide sequence ID" value="NZ_JAACZH010000010.1"/>
</dbReference>
<dbReference type="SMR" id="A5F5I2"/>
<dbReference type="KEGG" id="vco:VC0395_A2024"/>
<dbReference type="KEGG" id="vcr:VC395_2561"/>
<dbReference type="PATRIC" id="fig|345073.21.peg.2466"/>
<dbReference type="eggNOG" id="COG0617">
    <property type="taxonomic scope" value="Bacteria"/>
</dbReference>
<dbReference type="HOGENOM" id="CLU_015961_1_1_6"/>
<dbReference type="OrthoDB" id="9805698at2"/>
<dbReference type="Proteomes" id="UP000000249">
    <property type="component" value="Chromosome 2"/>
</dbReference>
<dbReference type="GO" id="GO:0005524">
    <property type="term" value="F:ATP binding"/>
    <property type="evidence" value="ECO:0007669"/>
    <property type="project" value="UniProtKB-UniRule"/>
</dbReference>
<dbReference type="GO" id="GO:0004810">
    <property type="term" value="F:CCA tRNA nucleotidyltransferase activity"/>
    <property type="evidence" value="ECO:0007669"/>
    <property type="project" value="UniProtKB-UniRule"/>
</dbReference>
<dbReference type="GO" id="GO:0004112">
    <property type="term" value="F:cyclic-nucleotide phosphodiesterase activity"/>
    <property type="evidence" value="ECO:0007669"/>
    <property type="project" value="UniProtKB-UniRule"/>
</dbReference>
<dbReference type="GO" id="GO:0000287">
    <property type="term" value="F:magnesium ion binding"/>
    <property type="evidence" value="ECO:0007669"/>
    <property type="project" value="UniProtKB-UniRule"/>
</dbReference>
<dbReference type="GO" id="GO:0016791">
    <property type="term" value="F:phosphatase activity"/>
    <property type="evidence" value="ECO:0007669"/>
    <property type="project" value="UniProtKB-UniRule"/>
</dbReference>
<dbReference type="GO" id="GO:0000049">
    <property type="term" value="F:tRNA binding"/>
    <property type="evidence" value="ECO:0007669"/>
    <property type="project" value="UniProtKB-UniRule"/>
</dbReference>
<dbReference type="GO" id="GO:0042245">
    <property type="term" value="P:RNA repair"/>
    <property type="evidence" value="ECO:0007669"/>
    <property type="project" value="UniProtKB-KW"/>
</dbReference>
<dbReference type="GO" id="GO:0001680">
    <property type="term" value="P:tRNA 3'-terminal CCA addition"/>
    <property type="evidence" value="ECO:0007669"/>
    <property type="project" value="UniProtKB-UniRule"/>
</dbReference>
<dbReference type="CDD" id="cd00077">
    <property type="entry name" value="HDc"/>
    <property type="match status" value="1"/>
</dbReference>
<dbReference type="CDD" id="cd05398">
    <property type="entry name" value="NT_ClassII-CCAase"/>
    <property type="match status" value="1"/>
</dbReference>
<dbReference type="FunFam" id="1.10.3090.10:FF:000001">
    <property type="entry name" value="Multifunctional CCA protein"/>
    <property type="match status" value="1"/>
</dbReference>
<dbReference type="FunFam" id="3.30.460.10:FF:000016">
    <property type="entry name" value="Multifunctional CCA protein"/>
    <property type="match status" value="1"/>
</dbReference>
<dbReference type="Gene3D" id="3.30.460.10">
    <property type="entry name" value="Beta Polymerase, domain 2"/>
    <property type="match status" value="1"/>
</dbReference>
<dbReference type="Gene3D" id="1.10.3090.10">
    <property type="entry name" value="cca-adding enzyme, domain 2"/>
    <property type="match status" value="1"/>
</dbReference>
<dbReference type="HAMAP" id="MF_01261">
    <property type="entry name" value="CCA_bact_type1"/>
    <property type="match status" value="1"/>
</dbReference>
<dbReference type="HAMAP" id="MF_01262">
    <property type="entry name" value="CCA_bact_type2"/>
    <property type="match status" value="1"/>
</dbReference>
<dbReference type="InterPro" id="IPR012006">
    <property type="entry name" value="CCA_bact"/>
</dbReference>
<dbReference type="InterPro" id="IPR003607">
    <property type="entry name" value="HD/PDEase_dom"/>
</dbReference>
<dbReference type="InterPro" id="IPR006674">
    <property type="entry name" value="HD_domain"/>
</dbReference>
<dbReference type="InterPro" id="IPR043519">
    <property type="entry name" value="NT_sf"/>
</dbReference>
<dbReference type="InterPro" id="IPR002646">
    <property type="entry name" value="PolA_pol_head_dom"/>
</dbReference>
<dbReference type="InterPro" id="IPR032828">
    <property type="entry name" value="PolyA_RNA-bd"/>
</dbReference>
<dbReference type="InterPro" id="IPR050124">
    <property type="entry name" value="tRNA_CCA-adding_enzyme"/>
</dbReference>
<dbReference type="NCBIfam" id="NF008137">
    <property type="entry name" value="PRK10885.1"/>
    <property type="match status" value="1"/>
</dbReference>
<dbReference type="PANTHER" id="PTHR47545">
    <property type="entry name" value="MULTIFUNCTIONAL CCA PROTEIN"/>
    <property type="match status" value="1"/>
</dbReference>
<dbReference type="PANTHER" id="PTHR47545:SF1">
    <property type="entry name" value="MULTIFUNCTIONAL CCA PROTEIN"/>
    <property type="match status" value="1"/>
</dbReference>
<dbReference type="Pfam" id="PF01966">
    <property type="entry name" value="HD"/>
    <property type="match status" value="1"/>
</dbReference>
<dbReference type="Pfam" id="PF01743">
    <property type="entry name" value="PolyA_pol"/>
    <property type="match status" value="1"/>
</dbReference>
<dbReference type="Pfam" id="PF12627">
    <property type="entry name" value="PolyA_pol_RNAbd"/>
    <property type="match status" value="1"/>
</dbReference>
<dbReference type="PIRSF" id="PIRSF000813">
    <property type="entry name" value="CCA_bact"/>
    <property type="match status" value="1"/>
</dbReference>
<dbReference type="SUPFAM" id="SSF81301">
    <property type="entry name" value="Nucleotidyltransferase"/>
    <property type="match status" value="1"/>
</dbReference>
<dbReference type="SUPFAM" id="SSF81891">
    <property type="entry name" value="Poly A polymerase C-terminal region-like"/>
    <property type="match status" value="1"/>
</dbReference>
<dbReference type="PROSITE" id="PS51831">
    <property type="entry name" value="HD"/>
    <property type="match status" value="1"/>
</dbReference>
<keyword id="KW-0067">ATP-binding</keyword>
<keyword id="KW-0378">Hydrolase</keyword>
<keyword id="KW-0460">Magnesium</keyword>
<keyword id="KW-0479">Metal-binding</keyword>
<keyword id="KW-0511">Multifunctional enzyme</keyword>
<keyword id="KW-0533">Nickel</keyword>
<keyword id="KW-0547">Nucleotide-binding</keyword>
<keyword id="KW-0548">Nucleotidyltransferase</keyword>
<keyword id="KW-0692">RNA repair</keyword>
<keyword id="KW-0694">RNA-binding</keyword>
<keyword id="KW-0808">Transferase</keyword>
<keyword id="KW-0819">tRNA processing</keyword>
<organism>
    <name type="scientific">Vibrio cholerae serotype O1 (strain ATCC 39541 / Classical Ogawa 395 / O395)</name>
    <dbReference type="NCBI Taxonomy" id="345073"/>
    <lineage>
        <taxon>Bacteria</taxon>
        <taxon>Pseudomonadati</taxon>
        <taxon>Pseudomonadota</taxon>
        <taxon>Gammaproteobacteria</taxon>
        <taxon>Vibrionales</taxon>
        <taxon>Vibrionaceae</taxon>
        <taxon>Vibrio</taxon>
    </lineage>
</organism>